<evidence type="ECO:0000250" key="1">
    <source>
        <dbReference type="UniProtKB" id="Q9UNF1"/>
    </source>
</evidence>
<evidence type="ECO:0000255" key="2">
    <source>
        <dbReference type="PROSITE-ProRule" id="PRU00127"/>
    </source>
</evidence>
<evidence type="ECO:0000256" key="3">
    <source>
        <dbReference type="SAM" id="MobiDB-lite"/>
    </source>
</evidence>
<protein>
    <recommendedName>
        <fullName>Melanoma-associated antigen D2</fullName>
    </recommendedName>
    <alternativeName>
        <fullName>MAGE-D2 antigen</fullName>
    </alternativeName>
</protein>
<comment type="function">
    <text evidence="1">Regulates the expression, localization to the plasma membrane and function of the sodium chloride cotransporters SLC12A1 and SLC12A3, two key components of salt reabsorption in the distal renal tubule.</text>
</comment>
<comment type="subunit">
    <text evidence="1">Interacts with GNAS.</text>
</comment>
<dbReference type="EMBL" id="CR857238">
    <property type="protein sequence ID" value="CAH89535.1"/>
    <property type="molecule type" value="mRNA"/>
</dbReference>
<dbReference type="RefSeq" id="NP_001124666.1">
    <property type="nucleotide sequence ID" value="NM_001131194.2"/>
</dbReference>
<dbReference type="RefSeq" id="XP_009233159.1">
    <property type="nucleotide sequence ID" value="XM_009234884.4"/>
</dbReference>
<dbReference type="RefSeq" id="XP_009233160.1">
    <property type="nucleotide sequence ID" value="XM_009234885.4"/>
</dbReference>
<dbReference type="SMR" id="Q5RFC2"/>
<dbReference type="FunCoup" id="Q5RFC2">
    <property type="interactions" value="161"/>
</dbReference>
<dbReference type="STRING" id="9601.ENSPPYP00000022819"/>
<dbReference type="Ensembl" id="ENSPPYT00000023781.2">
    <property type="protein sequence ID" value="ENSPPYP00000022819.1"/>
    <property type="gene ID" value="ENSPPYG00000020385.2"/>
</dbReference>
<dbReference type="GeneID" id="100171511"/>
<dbReference type="KEGG" id="pon:100171511"/>
<dbReference type="CTD" id="10916"/>
<dbReference type="eggNOG" id="KOG4562">
    <property type="taxonomic scope" value="Eukaryota"/>
</dbReference>
<dbReference type="GeneTree" id="ENSGT00940000161795"/>
<dbReference type="HOGENOM" id="CLU_032317_2_0_1"/>
<dbReference type="InParanoid" id="Q5RFC2"/>
<dbReference type="OMA" id="DKSDHLY"/>
<dbReference type="OrthoDB" id="205198at2759"/>
<dbReference type="TreeFam" id="TF352132"/>
<dbReference type="Proteomes" id="UP000001595">
    <property type="component" value="Chromosome X"/>
</dbReference>
<dbReference type="GO" id="GO:0005829">
    <property type="term" value="C:cytosol"/>
    <property type="evidence" value="ECO:0007669"/>
    <property type="project" value="Ensembl"/>
</dbReference>
<dbReference type="GO" id="GO:0005730">
    <property type="term" value="C:nucleolus"/>
    <property type="evidence" value="ECO:0007669"/>
    <property type="project" value="Ensembl"/>
</dbReference>
<dbReference type="GO" id="GO:0005654">
    <property type="term" value="C:nucleoplasm"/>
    <property type="evidence" value="ECO:0007669"/>
    <property type="project" value="Ensembl"/>
</dbReference>
<dbReference type="GO" id="GO:0007565">
    <property type="term" value="P:female pregnancy"/>
    <property type="evidence" value="ECO:0007669"/>
    <property type="project" value="Ensembl"/>
</dbReference>
<dbReference type="GO" id="GO:0000122">
    <property type="term" value="P:negative regulation of transcription by RNA polymerase II"/>
    <property type="evidence" value="ECO:0007669"/>
    <property type="project" value="TreeGrafter"/>
</dbReference>
<dbReference type="GO" id="GO:0070294">
    <property type="term" value="P:renal sodium ion absorption"/>
    <property type="evidence" value="ECO:0000250"/>
    <property type="project" value="UniProtKB"/>
</dbReference>
<dbReference type="FunFam" id="1.10.10.1200:FF:000001">
    <property type="entry name" value="Melanoma-associated antigen D1"/>
    <property type="match status" value="1"/>
</dbReference>
<dbReference type="FunFam" id="1.10.10.1210:FF:000001">
    <property type="entry name" value="melanoma-associated antigen D1"/>
    <property type="match status" value="1"/>
</dbReference>
<dbReference type="Gene3D" id="1.10.10.1200">
    <property type="entry name" value="MAGE homology domain, winged helix WH1 motif"/>
    <property type="match status" value="1"/>
</dbReference>
<dbReference type="Gene3D" id="1.10.10.1210">
    <property type="entry name" value="MAGE homology domain, winged helix WH2 motif"/>
    <property type="match status" value="1"/>
</dbReference>
<dbReference type="InterPro" id="IPR037445">
    <property type="entry name" value="MAGE"/>
</dbReference>
<dbReference type="InterPro" id="IPR041898">
    <property type="entry name" value="MAGE_WH1"/>
</dbReference>
<dbReference type="InterPro" id="IPR041899">
    <property type="entry name" value="MAGE_WH2"/>
</dbReference>
<dbReference type="InterPro" id="IPR002190">
    <property type="entry name" value="MHD_dom"/>
</dbReference>
<dbReference type="PANTHER" id="PTHR11736:SF11">
    <property type="entry name" value="MELANOMA-ASSOCIATED ANTIGEN D2"/>
    <property type="match status" value="1"/>
</dbReference>
<dbReference type="PANTHER" id="PTHR11736">
    <property type="entry name" value="MELANOMA-ASSOCIATED ANTIGEN MAGE ANTIGEN"/>
    <property type="match status" value="1"/>
</dbReference>
<dbReference type="Pfam" id="PF01454">
    <property type="entry name" value="MAGE"/>
    <property type="match status" value="1"/>
</dbReference>
<dbReference type="SMART" id="SM01373">
    <property type="entry name" value="MAGE"/>
    <property type="match status" value="1"/>
</dbReference>
<dbReference type="PROSITE" id="PS50838">
    <property type="entry name" value="MAGE"/>
    <property type="match status" value="1"/>
</dbReference>
<keyword id="KW-0007">Acetylation</keyword>
<keyword id="KW-0597">Phosphoprotein</keyword>
<keyword id="KW-1185">Reference proteome</keyword>
<keyword id="KW-0825">Tumor antigen</keyword>
<name>MAGD2_PONAB</name>
<organism>
    <name type="scientific">Pongo abelii</name>
    <name type="common">Sumatran orangutan</name>
    <name type="synonym">Pongo pygmaeus abelii</name>
    <dbReference type="NCBI Taxonomy" id="9601"/>
    <lineage>
        <taxon>Eukaryota</taxon>
        <taxon>Metazoa</taxon>
        <taxon>Chordata</taxon>
        <taxon>Craniata</taxon>
        <taxon>Vertebrata</taxon>
        <taxon>Euteleostomi</taxon>
        <taxon>Mammalia</taxon>
        <taxon>Eutheria</taxon>
        <taxon>Euarchontoglires</taxon>
        <taxon>Primates</taxon>
        <taxon>Haplorrhini</taxon>
        <taxon>Catarrhini</taxon>
        <taxon>Hominidae</taxon>
        <taxon>Pongo</taxon>
    </lineage>
</organism>
<gene>
    <name type="primary">MAGED2</name>
</gene>
<feature type="initiator methionine" description="Removed" evidence="1">
    <location>
        <position position="1"/>
    </location>
</feature>
<feature type="chain" id="PRO_0000240630" description="Melanoma-associated antigen D2">
    <location>
        <begin position="2"/>
        <end position="606"/>
    </location>
</feature>
<feature type="domain" description="MAGE" evidence="2">
    <location>
        <begin position="279"/>
        <end position="478"/>
    </location>
</feature>
<feature type="region of interest" description="Disordered" evidence="3">
    <location>
        <begin position="1"/>
        <end position="29"/>
    </location>
</feature>
<feature type="region of interest" description="Disordered" evidence="3">
    <location>
        <begin position="52"/>
        <end position="204"/>
    </location>
</feature>
<feature type="region of interest" description="Disordered" evidence="3">
    <location>
        <begin position="248"/>
        <end position="275"/>
    </location>
</feature>
<feature type="region of interest" description="Disordered" evidence="3">
    <location>
        <begin position="534"/>
        <end position="563"/>
    </location>
</feature>
<feature type="compositionally biased region" description="Polar residues" evidence="3">
    <location>
        <begin position="79"/>
        <end position="100"/>
    </location>
</feature>
<feature type="compositionally biased region" description="Basic and acidic residues" evidence="3">
    <location>
        <begin position="122"/>
        <end position="131"/>
    </location>
</feature>
<feature type="compositionally biased region" description="Low complexity" evidence="3">
    <location>
        <begin position="142"/>
        <end position="164"/>
    </location>
</feature>
<feature type="compositionally biased region" description="Basic residues" evidence="3">
    <location>
        <begin position="171"/>
        <end position="181"/>
    </location>
</feature>
<feature type="compositionally biased region" description="Basic residues" evidence="3">
    <location>
        <begin position="248"/>
        <end position="260"/>
    </location>
</feature>
<feature type="modified residue" description="N-acetylserine" evidence="1">
    <location>
        <position position="2"/>
    </location>
</feature>
<feature type="modified residue" description="Phosphoserine" evidence="1">
    <location>
        <position position="5"/>
    </location>
</feature>
<feature type="modified residue" description="Phosphothreonine" evidence="1">
    <location>
        <position position="72"/>
    </location>
</feature>
<feature type="modified residue" description="Phosphoserine" evidence="1">
    <location>
        <position position="157"/>
    </location>
</feature>
<feature type="modified residue" description="Phosphoserine" evidence="1">
    <location>
        <position position="190"/>
    </location>
</feature>
<feature type="modified residue" description="Phosphoserine" evidence="1">
    <location>
        <position position="191"/>
    </location>
</feature>
<feature type="modified residue" description="Phosphoserine" evidence="1">
    <location>
        <position position="194"/>
    </location>
</feature>
<feature type="modified residue" description="Phosphoserine" evidence="1">
    <location>
        <position position="197"/>
    </location>
</feature>
<feature type="modified residue" description="Phosphoserine" evidence="1">
    <location>
        <position position="244"/>
    </location>
</feature>
<feature type="modified residue" description="Phosphoserine" evidence="1">
    <location>
        <position position="247"/>
    </location>
</feature>
<feature type="modified residue" description="Phosphoserine" evidence="1">
    <location>
        <position position="264"/>
    </location>
</feature>
<feature type="modified residue" description="Phosphoserine" evidence="1">
    <location>
        <position position="265"/>
    </location>
</feature>
<reference key="1">
    <citation type="submission" date="2004-11" db="EMBL/GenBank/DDBJ databases">
        <authorList>
            <consortium name="The German cDNA consortium"/>
        </authorList>
    </citation>
    <scope>NUCLEOTIDE SEQUENCE [LARGE SCALE MRNA]</scope>
    <source>
        <tissue>Kidney</tissue>
    </source>
</reference>
<accession>Q5RFC2</accession>
<sequence length="606" mass="64948">MSDTSESGAGLTRFQAEASEKDSSSMMQTLLTVTQNVEVPETLKASKALEVSEDVKVSKASGVSKATEVSKTPEAQEAPATQASSTTQLTDTQVLATENKSVAADTKKQNADPQAVTMPATETKKVSHVADTKVNTKAQETEAAPSQASADEPEPESAAAQSQENQDTRPKVKAKKARKVKHLDGEEDGSSDQSQASGTTGGRRVSKALMASMARRASRGPIAFWARRASRTRLAAWARRALLSLRSPKARRGKARRRAAKLQSSQEPEAPPPRDVALLQGRANDLVKYLLAKDQTKIPIKRSDMLKDIIKEYTDVYPEIIERAGYSLEKVFGIQLKEIDKNDHLYILLSTLEPTDAGILGTTKDSPKLGLLMVLLSIIFMNGNRSSEAVIWEVLRKLGLRPGIHHSLFGDVKKLITDEFVKQKYLDYARVPNSNPPEYEFFWGLRSYYETSKMKVLKFACKVQKKDPKEWAAQYREAMEADLKAAAEAAAEAKARAEIRARMGIGLGSENAAGPCNWDEADIGPWAKARIQAGAEAKAKAQESGSASTGASTSTNNSASASASTSGGFSAGASLTATLTFGLFAGLGGAGASTSGSSGACGFSYK</sequence>
<proteinExistence type="evidence at transcript level"/>